<feature type="chain" id="PRO_1000144132" description="Large ribosomal subunit protein uL13">
    <location>
        <begin position="1"/>
        <end position="147"/>
    </location>
</feature>
<feature type="region of interest" description="Disordered" evidence="2">
    <location>
        <begin position="126"/>
        <end position="147"/>
    </location>
</feature>
<protein>
    <recommendedName>
        <fullName evidence="1">Large ribosomal subunit protein uL13</fullName>
    </recommendedName>
    <alternativeName>
        <fullName evidence="3">50S ribosomal protein L13</fullName>
    </alternativeName>
</protein>
<gene>
    <name evidence="1" type="primary">rplM</name>
    <name type="ordered locus">Franean1_6018</name>
</gene>
<accession>A8LB01</accession>
<evidence type="ECO:0000255" key="1">
    <source>
        <dbReference type="HAMAP-Rule" id="MF_01366"/>
    </source>
</evidence>
<evidence type="ECO:0000256" key="2">
    <source>
        <dbReference type="SAM" id="MobiDB-lite"/>
    </source>
</evidence>
<evidence type="ECO:0000305" key="3"/>
<keyword id="KW-0687">Ribonucleoprotein</keyword>
<keyword id="KW-0689">Ribosomal protein</keyword>
<name>RL13_PARS2</name>
<comment type="function">
    <text evidence="1">This protein is one of the early assembly proteins of the 50S ribosomal subunit, although it is not seen to bind rRNA by itself. It is important during the early stages of 50S assembly.</text>
</comment>
<comment type="subunit">
    <text evidence="1">Part of the 50S ribosomal subunit.</text>
</comment>
<comment type="similarity">
    <text evidence="1">Belongs to the universal ribosomal protein uL13 family.</text>
</comment>
<sequence length="147" mass="16363">MRTYQPKPADVQRAWHIIDATDVVLGRLASQAAQLLRGKNKPYFAPHIDTGDFVVIINAGKVAMTGNKREQAKYHRHSGFPGGLRSTSYGELLDTRPHVIVERAIRGMLPHNRLGRAQGSKLKVYAGPTHPHQAQQPVPYEIKQVAQ</sequence>
<proteinExistence type="inferred from homology"/>
<dbReference type="EMBL" id="CP000820">
    <property type="protein sequence ID" value="ABW15362.1"/>
    <property type="molecule type" value="Genomic_DNA"/>
</dbReference>
<dbReference type="RefSeq" id="WP_020463458.1">
    <property type="nucleotide sequence ID" value="NC_009921.1"/>
</dbReference>
<dbReference type="SMR" id="A8LB01"/>
<dbReference type="STRING" id="298653.Franean1_6018"/>
<dbReference type="KEGG" id="fre:Franean1_6018"/>
<dbReference type="eggNOG" id="COG0102">
    <property type="taxonomic scope" value="Bacteria"/>
</dbReference>
<dbReference type="HOGENOM" id="CLU_082184_2_2_11"/>
<dbReference type="GO" id="GO:0022625">
    <property type="term" value="C:cytosolic large ribosomal subunit"/>
    <property type="evidence" value="ECO:0007669"/>
    <property type="project" value="TreeGrafter"/>
</dbReference>
<dbReference type="GO" id="GO:0003729">
    <property type="term" value="F:mRNA binding"/>
    <property type="evidence" value="ECO:0007669"/>
    <property type="project" value="TreeGrafter"/>
</dbReference>
<dbReference type="GO" id="GO:0003735">
    <property type="term" value="F:structural constituent of ribosome"/>
    <property type="evidence" value="ECO:0007669"/>
    <property type="project" value="InterPro"/>
</dbReference>
<dbReference type="GO" id="GO:0017148">
    <property type="term" value="P:negative regulation of translation"/>
    <property type="evidence" value="ECO:0007669"/>
    <property type="project" value="TreeGrafter"/>
</dbReference>
<dbReference type="GO" id="GO:0006412">
    <property type="term" value="P:translation"/>
    <property type="evidence" value="ECO:0007669"/>
    <property type="project" value="UniProtKB-UniRule"/>
</dbReference>
<dbReference type="CDD" id="cd00392">
    <property type="entry name" value="Ribosomal_L13"/>
    <property type="match status" value="1"/>
</dbReference>
<dbReference type="FunFam" id="3.90.1180.10:FF:000001">
    <property type="entry name" value="50S ribosomal protein L13"/>
    <property type="match status" value="1"/>
</dbReference>
<dbReference type="Gene3D" id="3.90.1180.10">
    <property type="entry name" value="Ribosomal protein L13"/>
    <property type="match status" value="1"/>
</dbReference>
<dbReference type="HAMAP" id="MF_01366">
    <property type="entry name" value="Ribosomal_uL13"/>
    <property type="match status" value="1"/>
</dbReference>
<dbReference type="InterPro" id="IPR005822">
    <property type="entry name" value="Ribosomal_uL13"/>
</dbReference>
<dbReference type="InterPro" id="IPR005823">
    <property type="entry name" value="Ribosomal_uL13_bac-type"/>
</dbReference>
<dbReference type="InterPro" id="IPR023563">
    <property type="entry name" value="Ribosomal_uL13_CS"/>
</dbReference>
<dbReference type="InterPro" id="IPR036899">
    <property type="entry name" value="Ribosomal_uL13_sf"/>
</dbReference>
<dbReference type="NCBIfam" id="TIGR01066">
    <property type="entry name" value="rplM_bact"/>
    <property type="match status" value="1"/>
</dbReference>
<dbReference type="PANTHER" id="PTHR11545:SF2">
    <property type="entry name" value="LARGE RIBOSOMAL SUBUNIT PROTEIN UL13M"/>
    <property type="match status" value="1"/>
</dbReference>
<dbReference type="PANTHER" id="PTHR11545">
    <property type="entry name" value="RIBOSOMAL PROTEIN L13"/>
    <property type="match status" value="1"/>
</dbReference>
<dbReference type="Pfam" id="PF00572">
    <property type="entry name" value="Ribosomal_L13"/>
    <property type="match status" value="1"/>
</dbReference>
<dbReference type="PIRSF" id="PIRSF002181">
    <property type="entry name" value="Ribosomal_L13"/>
    <property type="match status" value="1"/>
</dbReference>
<dbReference type="SUPFAM" id="SSF52161">
    <property type="entry name" value="Ribosomal protein L13"/>
    <property type="match status" value="1"/>
</dbReference>
<dbReference type="PROSITE" id="PS00783">
    <property type="entry name" value="RIBOSOMAL_L13"/>
    <property type="match status" value="1"/>
</dbReference>
<organism>
    <name type="scientific">Parafrankia sp. (strain EAN1pec)</name>
    <dbReference type="NCBI Taxonomy" id="298653"/>
    <lineage>
        <taxon>Bacteria</taxon>
        <taxon>Bacillati</taxon>
        <taxon>Actinomycetota</taxon>
        <taxon>Actinomycetes</taxon>
        <taxon>Frankiales</taxon>
        <taxon>Frankiaceae</taxon>
        <taxon>Parafrankia</taxon>
    </lineage>
</organism>
<reference key="1">
    <citation type="journal article" date="2007" name="Genome Res.">
        <title>Genome characteristics of facultatively symbiotic Frankia sp. strains reflect host range and host plant biogeography.</title>
        <authorList>
            <person name="Normand P."/>
            <person name="Lapierre P."/>
            <person name="Tisa L.S."/>
            <person name="Gogarten J.P."/>
            <person name="Alloisio N."/>
            <person name="Bagnarol E."/>
            <person name="Bassi C.A."/>
            <person name="Berry A.M."/>
            <person name="Bickhart D.M."/>
            <person name="Choisne N."/>
            <person name="Couloux A."/>
            <person name="Cournoyer B."/>
            <person name="Cruveiller S."/>
            <person name="Daubin V."/>
            <person name="Demange N."/>
            <person name="Francino M.P."/>
            <person name="Goltsman E."/>
            <person name="Huang Y."/>
            <person name="Kopp O.R."/>
            <person name="Labarre L."/>
            <person name="Lapidus A."/>
            <person name="Lavire C."/>
            <person name="Marechal J."/>
            <person name="Martinez M."/>
            <person name="Mastronunzio J.E."/>
            <person name="Mullin B.C."/>
            <person name="Niemann J."/>
            <person name="Pujic P."/>
            <person name="Rawnsley T."/>
            <person name="Rouy Z."/>
            <person name="Schenowitz C."/>
            <person name="Sellstedt A."/>
            <person name="Tavares F."/>
            <person name="Tomkins J.P."/>
            <person name="Vallenet D."/>
            <person name="Valverde C."/>
            <person name="Wall L.G."/>
            <person name="Wang Y."/>
            <person name="Medigue C."/>
            <person name="Benson D.R."/>
        </authorList>
    </citation>
    <scope>NUCLEOTIDE SEQUENCE [LARGE SCALE GENOMIC DNA]</scope>
    <source>
        <strain>EAN1pec</strain>
    </source>
</reference>